<feature type="chain" id="PRO_0000165406" description="S-adenosylmethionine:tRNA ribosyltransferase-isomerase">
    <location>
        <begin position="1"/>
        <end position="361"/>
    </location>
</feature>
<protein>
    <recommendedName>
        <fullName evidence="1">S-adenosylmethionine:tRNA ribosyltransferase-isomerase</fullName>
        <ecNumber evidence="1">2.4.99.17</ecNumber>
    </recommendedName>
    <alternativeName>
        <fullName evidence="1">Queuosine biosynthesis protein QueA</fullName>
    </alternativeName>
</protein>
<organism>
    <name type="scientific">Haemophilus ducreyi (strain 35000HP / ATCC 700724)</name>
    <dbReference type="NCBI Taxonomy" id="233412"/>
    <lineage>
        <taxon>Bacteria</taxon>
        <taxon>Pseudomonadati</taxon>
        <taxon>Pseudomonadota</taxon>
        <taxon>Gammaproteobacteria</taxon>
        <taxon>Pasteurellales</taxon>
        <taxon>Pasteurellaceae</taxon>
        <taxon>Haemophilus</taxon>
    </lineage>
</organism>
<comment type="function">
    <text evidence="1">Transfers and isomerizes the ribose moiety from AdoMet to the 7-aminomethyl group of 7-deazaguanine (preQ1-tRNA) to give epoxyqueuosine (oQ-tRNA).</text>
</comment>
<comment type="catalytic activity">
    <reaction evidence="1">
        <text>7-aminomethyl-7-carbaguanosine(34) in tRNA + S-adenosyl-L-methionine = epoxyqueuosine(34) in tRNA + adenine + L-methionine + 2 H(+)</text>
        <dbReference type="Rhea" id="RHEA:32155"/>
        <dbReference type="Rhea" id="RHEA-COMP:10342"/>
        <dbReference type="Rhea" id="RHEA-COMP:18582"/>
        <dbReference type="ChEBI" id="CHEBI:15378"/>
        <dbReference type="ChEBI" id="CHEBI:16708"/>
        <dbReference type="ChEBI" id="CHEBI:57844"/>
        <dbReference type="ChEBI" id="CHEBI:59789"/>
        <dbReference type="ChEBI" id="CHEBI:82833"/>
        <dbReference type="ChEBI" id="CHEBI:194443"/>
        <dbReference type="EC" id="2.4.99.17"/>
    </reaction>
</comment>
<comment type="pathway">
    <text evidence="1">tRNA modification; tRNA-queuosine biosynthesis.</text>
</comment>
<comment type="subunit">
    <text evidence="1">Monomer.</text>
</comment>
<comment type="subcellular location">
    <subcellularLocation>
        <location evidence="1">Cytoplasm</location>
    </subcellularLocation>
</comment>
<comment type="similarity">
    <text evidence="1">Belongs to the QueA family.</text>
</comment>
<gene>
    <name evidence="1" type="primary">queA</name>
    <name type="ordered locus">HD_1257</name>
</gene>
<dbReference type="EC" id="2.4.99.17" evidence="1"/>
<dbReference type="EMBL" id="AE017143">
    <property type="protein sequence ID" value="AAP96089.1"/>
    <property type="molecule type" value="Genomic_DNA"/>
</dbReference>
<dbReference type="RefSeq" id="WP_010945138.1">
    <property type="nucleotide sequence ID" value="NC_002940.2"/>
</dbReference>
<dbReference type="SMR" id="Q7VLY1"/>
<dbReference type="STRING" id="233412.HD_1257"/>
<dbReference type="KEGG" id="hdu:HD_1257"/>
<dbReference type="eggNOG" id="COG0809">
    <property type="taxonomic scope" value="Bacteria"/>
</dbReference>
<dbReference type="HOGENOM" id="CLU_039110_1_0_6"/>
<dbReference type="OrthoDB" id="9805933at2"/>
<dbReference type="UniPathway" id="UPA00392"/>
<dbReference type="Proteomes" id="UP000001022">
    <property type="component" value="Chromosome"/>
</dbReference>
<dbReference type="GO" id="GO:0005737">
    <property type="term" value="C:cytoplasm"/>
    <property type="evidence" value="ECO:0007669"/>
    <property type="project" value="UniProtKB-SubCell"/>
</dbReference>
<dbReference type="GO" id="GO:0051075">
    <property type="term" value="F:S-adenosylmethionine:tRNA ribosyltransferase-isomerase activity"/>
    <property type="evidence" value="ECO:0007669"/>
    <property type="project" value="UniProtKB-EC"/>
</dbReference>
<dbReference type="GO" id="GO:0008616">
    <property type="term" value="P:queuosine biosynthetic process"/>
    <property type="evidence" value="ECO:0007669"/>
    <property type="project" value="UniProtKB-UniRule"/>
</dbReference>
<dbReference type="GO" id="GO:0002099">
    <property type="term" value="P:tRNA wobble guanine modification"/>
    <property type="evidence" value="ECO:0007669"/>
    <property type="project" value="TreeGrafter"/>
</dbReference>
<dbReference type="FunFam" id="2.40.10.240:FF:000001">
    <property type="entry name" value="S-adenosylmethionine:tRNA ribosyltransferase-isomerase"/>
    <property type="match status" value="1"/>
</dbReference>
<dbReference type="FunFam" id="3.40.1780.10:FF:000001">
    <property type="entry name" value="S-adenosylmethionine:tRNA ribosyltransferase-isomerase"/>
    <property type="match status" value="1"/>
</dbReference>
<dbReference type="Gene3D" id="2.40.10.240">
    <property type="entry name" value="QueA-like"/>
    <property type="match status" value="1"/>
</dbReference>
<dbReference type="Gene3D" id="3.40.1780.10">
    <property type="entry name" value="QueA-like"/>
    <property type="match status" value="1"/>
</dbReference>
<dbReference type="HAMAP" id="MF_00113">
    <property type="entry name" value="QueA"/>
    <property type="match status" value="1"/>
</dbReference>
<dbReference type="InterPro" id="IPR003699">
    <property type="entry name" value="QueA"/>
</dbReference>
<dbReference type="InterPro" id="IPR042118">
    <property type="entry name" value="QueA_dom1"/>
</dbReference>
<dbReference type="InterPro" id="IPR042119">
    <property type="entry name" value="QueA_dom2"/>
</dbReference>
<dbReference type="InterPro" id="IPR036100">
    <property type="entry name" value="QueA_sf"/>
</dbReference>
<dbReference type="NCBIfam" id="NF001140">
    <property type="entry name" value="PRK00147.1"/>
    <property type="match status" value="1"/>
</dbReference>
<dbReference type="NCBIfam" id="TIGR00113">
    <property type="entry name" value="queA"/>
    <property type="match status" value="1"/>
</dbReference>
<dbReference type="PANTHER" id="PTHR30307">
    <property type="entry name" value="S-ADENOSYLMETHIONINE:TRNA RIBOSYLTRANSFERASE-ISOMERASE"/>
    <property type="match status" value="1"/>
</dbReference>
<dbReference type="PANTHER" id="PTHR30307:SF0">
    <property type="entry name" value="S-ADENOSYLMETHIONINE:TRNA RIBOSYLTRANSFERASE-ISOMERASE"/>
    <property type="match status" value="1"/>
</dbReference>
<dbReference type="Pfam" id="PF02547">
    <property type="entry name" value="Queuosine_synth"/>
    <property type="match status" value="1"/>
</dbReference>
<dbReference type="SUPFAM" id="SSF111337">
    <property type="entry name" value="QueA-like"/>
    <property type="match status" value="1"/>
</dbReference>
<evidence type="ECO:0000255" key="1">
    <source>
        <dbReference type="HAMAP-Rule" id="MF_00113"/>
    </source>
</evidence>
<sequence length="361" mass="40161">MLVSDFHFNLPDELIARYPKDERTASRLLHLNGESGKFSDLHFSDLLDHINPGDLLIFNNTRVIPARLYGRKESGGKLEVLIERVLDEHHCLAHIRCSKAPKAGTKLILGEDKLGIGNGLEATMISRHDTLFELRFNATTPLFTLLQQAGHIPLPPYIDRPDEDFDQERYQTVYSKVLGAVAAPTAGLHFDNPMLDKLKAKGVNMAFVTLHVGAGTFQPVRVENILEHNMHAEYAEVTQAVVDQILATKAAGKRVIAVGTTSVRSIESAAQATQPTGKLIAPFFSDTNIFLYPGKTFKIVDVLITNFHLPESTLIMLVSAFAGYRHTMNAYQHAVQQKYRFFSYGDAMLINKNPNALNDLP</sequence>
<name>QUEA_HAEDU</name>
<proteinExistence type="inferred from homology"/>
<accession>Q7VLY1</accession>
<reference key="1">
    <citation type="submission" date="2003-06" db="EMBL/GenBank/DDBJ databases">
        <title>The complete genome sequence of Haemophilus ducreyi.</title>
        <authorList>
            <person name="Munson R.S. Jr."/>
            <person name="Ray W.C."/>
            <person name="Mahairas G."/>
            <person name="Sabo P."/>
            <person name="Mungur R."/>
            <person name="Johnson L."/>
            <person name="Nguyen D."/>
            <person name="Wang J."/>
            <person name="Forst C."/>
            <person name="Hood L."/>
        </authorList>
    </citation>
    <scope>NUCLEOTIDE SEQUENCE [LARGE SCALE GENOMIC DNA]</scope>
    <source>
        <strain>35000HP / ATCC 700724</strain>
    </source>
</reference>
<keyword id="KW-0963">Cytoplasm</keyword>
<keyword id="KW-0671">Queuosine biosynthesis</keyword>
<keyword id="KW-1185">Reference proteome</keyword>
<keyword id="KW-0949">S-adenosyl-L-methionine</keyword>
<keyword id="KW-0808">Transferase</keyword>